<accession>Q920L2</accession>
<sequence>MAGVGAVSRLLRGRRLALAGATRGFHFSVGESKKASAKVSDAISTQYPVVDHEFDAVVVGAGGAGLRAAFGLSEAGFNTACLTKLFPTRSHTVAAQGGINAALGNMEEDNWRWHFYDTVKGSDWLGDQDAIHYMTEQAPASVVELENYGMPFSRTEDGRIYQRAFGGQSLKFGKGGQAHRCCCVADRTGHSLLHTLYGRSLRYDTSYFVEYFALDLLMENGECRGVIALCIEDGSIHRIRAKNTIIATGGYGRTYFSCTSAHTSTGDGTAMVTRAGLPCQDLEFVQFHPTGIYGAGCLITEGCRGEGGILINSQGERFMERYAPVAKDLASRDVVSRSMTLEIREGRGCGPEKDHVYLQLHHLPPEQLATRLPGISETAMIFAGVDVTKEPIPVLPTVHYNMGGIPTNYKGQVLKHVNGQDQIVPGLYACGEAACASVHGANRLGANSLLDLVVFGRACALSIAESCRPGDKVPPIKANAGEESVMNLDKLRFADGSVRTSELRLSMQKSMQSHAAVFRVGSVLQEGCEKVSQLYGDLQHLKTFDRGMVWNTDLVETLELQNLMLCALQTIYGAEARKESRGAHAREDYKVRIDEYDYSKPIEGQQKKPFAEHWRKHTLSYVDTKTGKVTLDYRPVIDKTLNEADCATVPPAIRSY</sequence>
<reference key="1">
    <citation type="submission" date="2001-10" db="EMBL/GenBank/DDBJ databases">
        <title>Complex II from rat mitochondria.</title>
        <authorList>
            <person name="Tomitsuka E."/>
            <person name="Kita K."/>
        </authorList>
    </citation>
    <scope>NUCLEOTIDE SEQUENCE [MRNA]</scope>
</reference>
<reference key="2">
    <citation type="submission" date="2006-11" db="UniProtKB">
        <authorList>
            <person name="Lubec G."/>
            <person name="Afjehi-Sadat L."/>
        </authorList>
    </citation>
    <scope>PROTEIN SEQUENCE OF 39-67; 225-238; 354-371 AND 444-457</scope>
    <scope>IDENTIFICATION BY MASS SPECTROMETRY</scope>
    <source>
        <strain>Sprague-Dawley</strain>
        <tissue>Spinal cord</tissue>
    </source>
</reference>
<gene>
    <name type="primary">Sdha</name>
</gene>
<organism>
    <name type="scientific">Rattus norvegicus</name>
    <name type="common">Rat</name>
    <dbReference type="NCBI Taxonomy" id="10116"/>
    <lineage>
        <taxon>Eukaryota</taxon>
        <taxon>Metazoa</taxon>
        <taxon>Chordata</taxon>
        <taxon>Craniata</taxon>
        <taxon>Vertebrata</taxon>
        <taxon>Euteleostomi</taxon>
        <taxon>Mammalia</taxon>
        <taxon>Eutheria</taxon>
        <taxon>Euarchontoglires</taxon>
        <taxon>Glires</taxon>
        <taxon>Rodentia</taxon>
        <taxon>Myomorpha</taxon>
        <taxon>Muroidea</taxon>
        <taxon>Muridae</taxon>
        <taxon>Murinae</taxon>
        <taxon>Rattus</taxon>
    </lineage>
</organism>
<keyword id="KW-0007">Acetylation</keyword>
<keyword id="KW-0903">Direct protein sequencing</keyword>
<keyword id="KW-0249">Electron transport</keyword>
<keyword id="KW-0274">FAD</keyword>
<keyword id="KW-0285">Flavoprotein</keyword>
<keyword id="KW-0472">Membrane</keyword>
<keyword id="KW-0496">Mitochondrion</keyword>
<keyword id="KW-0999">Mitochondrion inner membrane</keyword>
<keyword id="KW-0560">Oxidoreductase</keyword>
<keyword id="KW-0597">Phosphoprotein</keyword>
<keyword id="KW-1185">Reference proteome</keyword>
<keyword id="KW-0809">Transit peptide</keyword>
<keyword id="KW-0813">Transport</keyword>
<keyword id="KW-0816">Tricarboxylic acid cycle</keyword>
<keyword id="KW-0043">Tumor suppressor</keyword>
<dbReference type="EC" id="1.3.5.1" evidence="2"/>
<dbReference type="EC" id="1.1.5.-" evidence="1"/>
<dbReference type="EMBL" id="AB072907">
    <property type="protein sequence ID" value="BAB69818.1"/>
    <property type="molecule type" value="mRNA"/>
</dbReference>
<dbReference type="RefSeq" id="NP_569112.1">
    <property type="nucleotide sequence ID" value="NM_130428.1"/>
</dbReference>
<dbReference type="SMR" id="Q920L2"/>
<dbReference type="BioGRID" id="250905">
    <property type="interactions" value="4"/>
</dbReference>
<dbReference type="ComplexPortal" id="CPX-564">
    <property type="entry name" value="Mitochondrial respiratory chain complex II"/>
</dbReference>
<dbReference type="CORUM" id="Q920L2"/>
<dbReference type="FunCoup" id="Q920L2">
    <property type="interactions" value="1740"/>
</dbReference>
<dbReference type="IntAct" id="Q920L2">
    <property type="interactions" value="2"/>
</dbReference>
<dbReference type="MINT" id="Q920L2"/>
<dbReference type="STRING" id="10116.ENSRNOP00000018336"/>
<dbReference type="ChEMBL" id="CHEMBL4523415"/>
<dbReference type="CarbonylDB" id="Q920L2"/>
<dbReference type="GlyGen" id="Q920L2">
    <property type="glycosylation" value="5 sites, 1 O-linked glycan (5 sites)"/>
</dbReference>
<dbReference type="iPTMnet" id="Q920L2"/>
<dbReference type="PhosphoSitePlus" id="Q920L2"/>
<dbReference type="SwissPalm" id="Q920L2"/>
<dbReference type="jPOST" id="Q920L2"/>
<dbReference type="PaxDb" id="10116-ENSRNOP00000018336"/>
<dbReference type="GeneID" id="157074"/>
<dbReference type="KEGG" id="rno:157074"/>
<dbReference type="UCSC" id="RGD:621557">
    <property type="organism name" value="rat"/>
</dbReference>
<dbReference type="AGR" id="RGD:621557"/>
<dbReference type="CTD" id="6389"/>
<dbReference type="RGD" id="621557">
    <property type="gene designation" value="Sdha"/>
</dbReference>
<dbReference type="VEuPathDB" id="HostDB:ENSRNOG00000013331"/>
<dbReference type="eggNOG" id="KOG2403">
    <property type="taxonomic scope" value="Eukaryota"/>
</dbReference>
<dbReference type="HOGENOM" id="CLU_014312_6_1_1"/>
<dbReference type="InParanoid" id="Q920L2"/>
<dbReference type="OrthoDB" id="22909at9989"/>
<dbReference type="PhylomeDB" id="Q920L2"/>
<dbReference type="BRENDA" id="1.3.5.1">
    <property type="organism ID" value="5301"/>
</dbReference>
<dbReference type="Reactome" id="R-RNO-71403">
    <property type="pathway name" value="Citric acid cycle (TCA cycle)"/>
</dbReference>
<dbReference type="Reactome" id="R-RNO-9854311">
    <property type="pathway name" value="Maturation of TCA enzymes and regulation of TCA cycle"/>
</dbReference>
<dbReference type="SABIO-RK" id="Q920L2"/>
<dbReference type="UniPathway" id="UPA00223">
    <property type="reaction ID" value="UER01006"/>
</dbReference>
<dbReference type="PRO" id="PR:Q920L2"/>
<dbReference type="Proteomes" id="UP000002494">
    <property type="component" value="Chromosome 1"/>
</dbReference>
<dbReference type="Bgee" id="ENSRNOG00000013331">
    <property type="expression patterns" value="Expressed in heart and 19 other cell types or tissues"/>
</dbReference>
<dbReference type="GO" id="GO:0005743">
    <property type="term" value="C:mitochondrial inner membrane"/>
    <property type="evidence" value="ECO:0000314"/>
    <property type="project" value="RGD"/>
</dbReference>
<dbReference type="GO" id="GO:0005739">
    <property type="term" value="C:mitochondrion"/>
    <property type="evidence" value="ECO:0000266"/>
    <property type="project" value="RGD"/>
</dbReference>
<dbReference type="GO" id="GO:0045273">
    <property type="term" value="C:respiratory chain complex II (succinate dehydrogenase)"/>
    <property type="evidence" value="ECO:0000250"/>
    <property type="project" value="UniProtKB"/>
</dbReference>
<dbReference type="GO" id="GO:0009055">
    <property type="term" value="F:electron transfer activity"/>
    <property type="evidence" value="ECO:0000318"/>
    <property type="project" value="GO_Central"/>
</dbReference>
<dbReference type="GO" id="GO:0050660">
    <property type="term" value="F:flavin adenine dinucleotide binding"/>
    <property type="evidence" value="ECO:0000318"/>
    <property type="project" value="GO_Central"/>
</dbReference>
<dbReference type="GO" id="GO:0008177">
    <property type="term" value="F:succinate dehydrogenase (quinone) activity"/>
    <property type="evidence" value="ECO:0000315"/>
    <property type="project" value="RGD"/>
</dbReference>
<dbReference type="GO" id="GO:0006121">
    <property type="term" value="P:mitochondrial electron transport, succinate to ubiquinone"/>
    <property type="evidence" value="ECO:0000318"/>
    <property type="project" value="GO_Central"/>
</dbReference>
<dbReference type="GO" id="GO:0007399">
    <property type="term" value="P:nervous system development"/>
    <property type="evidence" value="ECO:0000266"/>
    <property type="project" value="RGD"/>
</dbReference>
<dbReference type="GO" id="GO:0042776">
    <property type="term" value="P:proton motive force-driven mitochondrial ATP synthesis"/>
    <property type="evidence" value="ECO:0000303"/>
    <property type="project" value="ComplexPortal"/>
</dbReference>
<dbReference type="GO" id="GO:0022904">
    <property type="term" value="P:respiratory electron transport chain"/>
    <property type="evidence" value="ECO:0000315"/>
    <property type="project" value="RGD"/>
</dbReference>
<dbReference type="GO" id="GO:0006105">
    <property type="term" value="P:succinate metabolic process"/>
    <property type="evidence" value="ECO:0000315"/>
    <property type="project" value="RGD"/>
</dbReference>
<dbReference type="GO" id="GO:0006099">
    <property type="term" value="P:tricarboxylic acid cycle"/>
    <property type="evidence" value="ECO:0000303"/>
    <property type="project" value="ComplexPortal"/>
</dbReference>
<dbReference type="FunFam" id="3.90.700.10:FF:000001">
    <property type="entry name" value="Mitochondrial succinate dehydrogenase flavoprotein subunit"/>
    <property type="match status" value="1"/>
</dbReference>
<dbReference type="FunFam" id="4.10.80.40:FF:000004">
    <property type="entry name" value="Succinate dehydrogenase [ubiquinone] flavoprotein subunit, mitochondrial"/>
    <property type="match status" value="1"/>
</dbReference>
<dbReference type="FunFam" id="3.50.50.60:FF:000482">
    <property type="entry name" value="Succinate dehydrogenase complex, subunit A, flavoprotein (Fp)"/>
    <property type="match status" value="1"/>
</dbReference>
<dbReference type="FunFam" id="3.50.50.60:FF:001062">
    <property type="entry name" value="Succinate dehydrogenase complex, subunit A, flavoprotein (Fp)"/>
    <property type="match status" value="1"/>
</dbReference>
<dbReference type="FunFam" id="1.20.58.100:FF:000001">
    <property type="entry name" value="Succinate dehydrogenase flavoprotein subunit (SdhA)"/>
    <property type="match status" value="1"/>
</dbReference>
<dbReference type="Gene3D" id="3.50.50.60">
    <property type="entry name" value="FAD/NAD(P)-binding domain"/>
    <property type="match status" value="1"/>
</dbReference>
<dbReference type="Gene3D" id="1.20.58.100">
    <property type="entry name" value="Fumarate reductase/succinate dehydrogenase flavoprotein-like, C-terminal domain"/>
    <property type="match status" value="1"/>
</dbReference>
<dbReference type="Gene3D" id="4.10.80.40">
    <property type="entry name" value="succinate dehydrogenase protein domain"/>
    <property type="match status" value="1"/>
</dbReference>
<dbReference type="Gene3D" id="3.90.700.10">
    <property type="entry name" value="Succinate dehydrogenase/fumarate reductase flavoprotein, catalytic domain"/>
    <property type="match status" value="1"/>
</dbReference>
<dbReference type="InterPro" id="IPR003953">
    <property type="entry name" value="FAD-dep_OxRdtase_2_FAD-bd"/>
</dbReference>
<dbReference type="InterPro" id="IPR036188">
    <property type="entry name" value="FAD/NAD-bd_sf"/>
</dbReference>
<dbReference type="InterPro" id="IPR003952">
    <property type="entry name" value="FRD_SDH_FAD_BS"/>
</dbReference>
<dbReference type="InterPro" id="IPR037099">
    <property type="entry name" value="Fum_R/Succ_DH_flav-like_C_sf"/>
</dbReference>
<dbReference type="InterPro" id="IPR015939">
    <property type="entry name" value="Fum_Rdtase/Succ_DH_flav-like_C"/>
</dbReference>
<dbReference type="InterPro" id="IPR030664">
    <property type="entry name" value="SdhA/FrdA/AprA"/>
</dbReference>
<dbReference type="InterPro" id="IPR027477">
    <property type="entry name" value="Succ_DH/fumarate_Rdtase_cat_sf"/>
</dbReference>
<dbReference type="InterPro" id="IPR011281">
    <property type="entry name" value="Succ_DH_flav_su_fwd"/>
</dbReference>
<dbReference type="InterPro" id="IPR014006">
    <property type="entry name" value="Succ_Dhase_FrdA_Gneg"/>
</dbReference>
<dbReference type="NCBIfam" id="TIGR01816">
    <property type="entry name" value="sdhA_forward"/>
    <property type="match status" value="1"/>
</dbReference>
<dbReference type="NCBIfam" id="TIGR01812">
    <property type="entry name" value="sdhA_frdA_Gneg"/>
    <property type="match status" value="1"/>
</dbReference>
<dbReference type="PANTHER" id="PTHR11632">
    <property type="entry name" value="SUCCINATE DEHYDROGENASE 2 FLAVOPROTEIN SUBUNIT"/>
    <property type="match status" value="1"/>
</dbReference>
<dbReference type="PANTHER" id="PTHR11632:SF51">
    <property type="entry name" value="SUCCINATE DEHYDROGENASE [UBIQUINONE] FLAVOPROTEIN SUBUNIT, MITOCHONDRIAL"/>
    <property type="match status" value="1"/>
</dbReference>
<dbReference type="Pfam" id="PF00890">
    <property type="entry name" value="FAD_binding_2"/>
    <property type="match status" value="1"/>
</dbReference>
<dbReference type="Pfam" id="PF02910">
    <property type="entry name" value="Succ_DH_flav_C"/>
    <property type="match status" value="1"/>
</dbReference>
<dbReference type="PIRSF" id="PIRSF000171">
    <property type="entry name" value="SDHA_APRA_LASPO"/>
    <property type="match status" value="1"/>
</dbReference>
<dbReference type="SUPFAM" id="SSF51905">
    <property type="entry name" value="FAD/NAD(P)-binding domain"/>
    <property type="match status" value="1"/>
</dbReference>
<dbReference type="SUPFAM" id="SSF46977">
    <property type="entry name" value="Succinate dehydrogenase/fumarate reductase flavoprotein C-terminal domain"/>
    <property type="match status" value="1"/>
</dbReference>
<dbReference type="SUPFAM" id="SSF56425">
    <property type="entry name" value="Succinate dehydrogenase/fumarate reductase flavoprotein, catalytic domain"/>
    <property type="match status" value="1"/>
</dbReference>
<dbReference type="PROSITE" id="PS00504">
    <property type="entry name" value="FRD_SDH_FAD_BINDING"/>
    <property type="match status" value="1"/>
</dbReference>
<name>SDHA_RAT</name>
<evidence type="ECO:0000250" key="1">
    <source>
        <dbReference type="UniProtKB" id="P31039"/>
    </source>
</evidence>
<evidence type="ECO:0000250" key="2">
    <source>
        <dbReference type="UniProtKB" id="P31040"/>
    </source>
</evidence>
<evidence type="ECO:0000250" key="3">
    <source>
        <dbReference type="UniProtKB" id="Q0QF01"/>
    </source>
</evidence>
<evidence type="ECO:0000250" key="4">
    <source>
        <dbReference type="UniProtKB" id="Q8K2B3"/>
    </source>
</evidence>
<evidence type="ECO:0000250" key="5">
    <source>
        <dbReference type="UniProtKB" id="Q9YHT1"/>
    </source>
</evidence>
<evidence type="ECO:0000305" key="6"/>
<proteinExistence type="evidence at protein level"/>
<comment type="function">
    <text evidence="1 2">Flavoprotein (FP) subunit of succinate dehydrogenase (SDH) that is involved in complex II of the mitochondrial electron transport chain and is responsible for transferring electrons from succinate to ubiquinone (coenzyme Q) (By similarity). SDH also oxidizes malate to the non-canonical enol form of oxaloacetate, enol-oxaloacetate. Enol-oxaloacetate, which is a potent inhibitor of the succinate dehydrogenase activity, is further isomerized into keto-oxaloacetate (By similarity). Can act as a tumor suppressor (By similarity).</text>
</comment>
<comment type="catalytic activity">
    <reaction evidence="2">
        <text>a ubiquinone + succinate = a ubiquinol + fumarate</text>
        <dbReference type="Rhea" id="RHEA:13713"/>
        <dbReference type="Rhea" id="RHEA-COMP:9565"/>
        <dbReference type="Rhea" id="RHEA-COMP:9566"/>
        <dbReference type="ChEBI" id="CHEBI:16389"/>
        <dbReference type="ChEBI" id="CHEBI:17976"/>
        <dbReference type="ChEBI" id="CHEBI:29806"/>
        <dbReference type="ChEBI" id="CHEBI:30031"/>
        <dbReference type="EC" id="1.3.5.1"/>
    </reaction>
</comment>
<comment type="catalytic activity">
    <reaction evidence="1">
        <text>(R)-malate + a quinone = enol-oxaloacetate + a quinol</text>
        <dbReference type="Rhea" id="RHEA:79827"/>
        <dbReference type="ChEBI" id="CHEBI:15588"/>
        <dbReference type="ChEBI" id="CHEBI:17479"/>
        <dbReference type="ChEBI" id="CHEBI:24646"/>
        <dbReference type="ChEBI" id="CHEBI:132124"/>
    </reaction>
    <physiologicalReaction direction="left-to-right" evidence="1">
        <dbReference type="Rhea" id="RHEA:79828"/>
    </physiologicalReaction>
</comment>
<comment type="catalytic activity">
    <reaction evidence="1">
        <text>(S)-malate + a quinone = enol-oxaloacetate + a quinol</text>
        <dbReference type="Rhea" id="RHEA:79831"/>
        <dbReference type="ChEBI" id="CHEBI:15589"/>
        <dbReference type="ChEBI" id="CHEBI:17479"/>
        <dbReference type="ChEBI" id="CHEBI:24646"/>
        <dbReference type="ChEBI" id="CHEBI:132124"/>
    </reaction>
    <physiologicalReaction direction="left-to-right" evidence="1">
        <dbReference type="Rhea" id="RHEA:79832"/>
    </physiologicalReaction>
</comment>
<comment type="cofactor">
    <cofactor evidence="3">
        <name>FAD</name>
        <dbReference type="ChEBI" id="CHEBI:57692"/>
    </cofactor>
</comment>
<comment type="activity regulation">
    <text evidence="1">Enol-oxaloacetate inhibits the succinate dehydrogenase activity.</text>
</comment>
<comment type="pathway">
    <text evidence="2">Carbohydrate metabolism; tricarboxylic acid cycle; fumarate from succinate (eukaryal route): step 1/1.</text>
</comment>
<comment type="subunit">
    <text evidence="2 3">Component of complex II composed of four subunits: the flavoprotein (FP) SDHA, iron-sulfur protein (IP) SDHB, and a cytochrome b560 composed of SDHC and SDHD (By similarity). Interacts with SDHAF2/SDH5; interaction is required for FAD attachment (By similarity). Interacts with TRAP1 (By similarity). Interacts with LACC1 (By similarity).</text>
</comment>
<comment type="subcellular location">
    <subcellularLocation>
        <location evidence="3">Mitochondrion inner membrane</location>
        <topology evidence="3">Peripheral membrane protein</topology>
        <orientation evidence="3">Matrix side</orientation>
    </subcellularLocation>
</comment>
<comment type="PTM">
    <text evidence="4">Acetylated. Deacetylated by SIRT3.</text>
</comment>
<comment type="PTM">
    <text evidence="2">Phosphorylation at Tyr-207 is important for efficient electron transfer in complex II and the prevention of ROS generation.</text>
</comment>
<comment type="similarity">
    <text evidence="6">Belongs to the FAD-dependent oxidoreductase 2 family. FRD/SDH subfamily.</text>
</comment>
<protein>
    <recommendedName>
        <fullName>Succinate dehydrogenase [ubiquinone] flavoprotein subunit, mitochondrial</fullName>
        <ecNumber evidence="2">1.3.5.1</ecNumber>
    </recommendedName>
    <alternativeName>
        <fullName>Flavoprotein subunit of complex II</fullName>
        <shortName>Fp</shortName>
    </alternativeName>
    <alternativeName>
        <fullName>Malate dehydrogenase [quinone] flavoprotein subunit</fullName>
        <ecNumber evidence="1">1.1.5.-</ecNumber>
    </alternativeName>
</protein>
<feature type="transit peptide" description="Mitochondrion" evidence="3">
    <location>
        <begin position="1"/>
        <end position="34"/>
    </location>
</feature>
<feature type="chain" id="PRO_0000010338" description="Succinate dehydrogenase [ubiquinone] flavoprotein subunit, mitochondrial">
    <location>
        <begin position="35"/>
        <end position="656"/>
    </location>
</feature>
<feature type="active site" description="Proton acceptor" evidence="5">
    <location>
        <position position="332"/>
    </location>
</feature>
<feature type="binding site" evidence="2">
    <location>
        <position position="61"/>
    </location>
    <ligand>
        <name>FAD</name>
        <dbReference type="ChEBI" id="CHEBI:57692"/>
    </ligand>
</feature>
<feature type="binding site" evidence="2">
    <location>
        <position position="64"/>
    </location>
    <ligand>
        <name>FAD</name>
        <dbReference type="ChEBI" id="CHEBI:57692"/>
    </ligand>
</feature>
<feature type="binding site" evidence="2">
    <location>
        <position position="83"/>
    </location>
    <ligand>
        <name>FAD</name>
        <dbReference type="ChEBI" id="CHEBI:57692"/>
    </ligand>
</feature>
<feature type="binding site" evidence="2">
    <location>
        <position position="84"/>
    </location>
    <ligand>
        <name>FAD</name>
        <dbReference type="ChEBI" id="CHEBI:57692"/>
    </ligand>
</feature>
<feature type="binding site" evidence="2">
    <location>
        <position position="90"/>
    </location>
    <ligand>
        <name>FAD</name>
        <dbReference type="ChEBI" id="CHEBI:57692"/>
    </ligand>
</feature>
<feature type="binding site" evidence="2">
    <location>
        <position position="92"/>
    </location>
    <ligand>
        <name>FAD</name>
        <dbReference type="ChEBI" id="CHEBI:57692"/>
    </ligand>
</feature>
<feature type="binding site" evidence="2">
    <location>
        <position position="97"/>
    </location>
    <ligand>
        <name>FAD</name>
        <dbReference type="ChEBI" id="CHEBI:57692"/>
    </ligand>
</feature>
<feature type="binding site" evidence="2">
    <location>
        <position position="213"/>
    </location>
    <ligand>
        <name>FAD</name>
        <dbReference type="ChEBI" id="CHEBI:57692"/>
    </ligand>
</feature>
<feature type="binding site" evidence="2">
    <location>
        <position position="267"/>
    </location>
    <ligand>
        <name>FAD</name>
        <dbReference type="ChEBI" id="CHEBI:57692"/>
    </ligand>
</feature>
<feature type="binding site" evidence="2">
    <location>
        <position position="288"/>
    </location>
    <ligand>
        <name>oxaloacetate</name>
        <dbReference type="ChEBI" id="CHEBI:16452"/>
    </ligand>
</feature>
<feature type="binding site" evidence="2">
    <location>
        <position position="332"/>
    </location>
    <ligand>
        <name>oxaloacetate</name>
        <dbReference type="ChEBI" id="CHEBI:16452"/>
    </ligand>
</feature>
<feature type="binding site" evidence="2">
    <location>
        <position position="399"/>
    </location>
    <ligand>
        <name>oxaloacetate</name>
        <dbReference type="ChEBI" id="CHEBI:16452"/>
    </ligand>
</feature>
<feature type="binding site" evidence="2">
    <location>
        <position position="432"/>
    </location>
    <ligand>
        <name>FAD</name>
        <dbReference type="ChEBI" id="CHEBI:57692"/>
    </ligand>
</feature>
<feature type="binding site" evidence="2">
    <location>
        <position position="443"/>
    </location>
    <ligand>
        <name>oxaloacetate</name>
        <dbReference type="ChEBI" id="CHEBI:16452"/>
    </ligand>
</feature>
<feature type="binding site" evidence="2">
    <location>
        <position position="446"/>
    </location>
    <ligand>
        <name>oxaloacetate</name>
        <dbReference type="ChEBI" id="CHEBI:16452"/>
    </ligand>
</feature>
<feature type="binding site" evidence="2">
    <location>
        <position position="448"/>
    </location>
    <ligand>
        <name>FAD</name>
        <dbReference type="ChEBI" id="CHEBI:57692"/>
    </ligand>
</feature>
<feature type="binding site" evidence="2">
    <location>
        <position position="449"/>
    </location>
    <ligand>
        <name>FAD</name>
        <dbReference type="ChEBI" id="CHEBI:57692"/>
    </ligand>
</feature>
<feature type="modified residue" description="Tele-8alpha-FAD histidine" evidence="3">
    <location>
        <position position="91"/>
    </location>
</feature>
<feature type="modified residue" description="N6-acetyllysine; alternate" evidence="2">
    <location>
        <position position="171"/>
    </location>
</feature>
<feature type="modified residue" description="N6-succinyllysine; alternate" evidence="4">
    <location>
        <position position="171"/>
    </location>
</feature>
<feature type="modified residue" description="N6-acetyllysine" evidence="4">
    <location>
        <position position="174"/>
    </location>
</feature>
<feature type="modified residue" description="Phosphotyrosine; by SRC" evidence="2">
    <location>
        <position position="207"/>
    </location>
</feature>
<feature type="modified residue" description="N6-acetyllysine; alternate" evidence="4">
    <location>
        <position position="242"/>
    </location>
</feature>
<feature type="modified residue" description="N6-succinyllysine; alternate" evidence="4">
    <location>
        <position position="242"/>
    </location>
</feature>
<feature type="modified residue" description="N6-acetyllysine; alternate" evidence="2">
    <location>
        <position position="327"/>
    </location>
</feature>
<feature type="modified residue" description="N6-succinyllysine; alternate" evidence="4">
    <location>
        <position position="327"/>
    </location>
</feature>
<feature type="modified residue" description="N6-acetyllysine" evidence="4">
    <location>
        <position position="415"/>
    </location>
</feature>
<feature type="modified residue" description="N6-acetyllysine" evidence="4">
    <location>
        <position position="472"/>
    </location>
</feature>
<feature type="modified residue" description="N6-acetyllysine; alternate" evidence="4">
    <location>
        <position position="477"/>
    </location>
</feature>
<feature type="modified residue" description="N6-succinyllysine; alternate" evidence="4">
    <location>
        <position position="477"/>
    </location>
</feature>
<feature type="modified residue" description="N6-acetyllysine; alternate" evidence="4">
    <location>
        <position position="490"/>
    </location>
</feature>
<feature type="modified residue" description="N6-succinyllysine; alternate" evidence="4">
    <location>
        <position position="490"/>
    </location>
</feature>
<feature type="modified residue" description="N6-acetyllysine" evidence="4">
    <location>
        <position position="509"/>
    </location>
</feature>
<feature type="modified residue" description="N6-acetyllysine; alternate" evidence="4">
    <location>
        <position position="530"/>
    </location>
</feature>
<feature type="modified residue" description="N6-succinyllysine; alternate" evidence="4">
    <location>
        <position position="530"/>
    </location>
</feature>
<feature type="modified residue" description="N6-acetyllysine" evidence="4">
    <location>
        <position position="542"/>
    </location>
</feature>
<feature type="modified residue" description="N6-acetyllysine" evidence="4">
    <location>
        <position position="590"/>
    </location>
</feature>
<feature type="modified residue" description="N6-acetyllysine" evidence="2">
    <location>
        <position position="600"/>
    </location>
</feature>
<feature type="modified residue" description="N6-succinyllysine" evidence="4">
    <location>
        <position position="607"/>
    </location>
</feature>
<feature type="modified residue" description="N6-acetyllysine" evidence="4">
    <location>
        <position position="616"/>
    </location>
</feature>
<feature type="modified residue" description="N6-acetyllysine" evidence="4">
    <location>
        <position position="625"/>
    </location>
</feature>
<feature type="modified residue" description="N6-acetyllysine" evidence="4">
    <location>
        <position position="628"/>
    </location>
</feature>
<feature type="modified residue" description="N6-acetyllysine" evidence="4">
    <location>
        <position position="639"/>
    </location>
</feature>